<sequence length="1406" mass="154214">MRRLPLLPPCPLLLLLLLPAEVRCTTACTDDCSLKNVTEEMGTSSNDELSVNATSGNRRLSEDVSLPGRAMSDQNSVAQPRAVLDLKTEYVGVTSVNLTWTVNDTASDSYTYRIEVRNGSSINNKTSDITDAEITGLIPGTLYTFTVFAVAADGQTAGEGASISLYTKPSPVLDLKAEYVGVTSVNLTWTVNDTASASYTYRIEVTSDSSIDSLTSSVTMAEITGLIPGTLYSFKVFAVAADNRTEADGASISLYTKPSPVLDLKAEYVGVTSVNLTWTVNGTALTAYTYRIEVRNATSIRNETSNINKIEITGLIPGTSYNFKVFATPVNNTTEEEGLSLNLYTKPSPVLRVVTEYVGVTSVNLTWMVDDTASDSYTYRIEVRNGSSINNKTSDITDAEITGLIPGTLYTFTVFAVAADGQTAGEGASISLYTKPSPVLDLKAEYVGVTSVNLTWTVNDTASASYTYRIEVTSDSSIDSLTSNVTMAEITGLIPGTLYNFTVFAVAADNRTEADGAFTSLYTKPTPVTDLKAEHGVTSVSLNWMVNDTASDSYTYRIEVRNGHSVNNKTSNIPETEITGLNPGTLYTFTVFAVAADGETEGEGASISVYTKPRAVLHLKTEYVGVTSVNLTWTVNDTDSASYTYRIEVRNGSSINNKTSDITDAEITGLDPGTLYIFTVFAVAADGQTAGEGASISLYTKPSMVLNLKAEYVTMTSVNLTWMVNDAESASYTYRIEVAHESLINETMSNVTKSIVTYLIPGTSYNFTVFAIAADNQTEGEGASISQNTVPSSVNAFQCEAVANMSYLTLKWNCPYGGYSGFDIEIFNGTWTKKQQSQFCGREGSEEIFKTEPLDYYKTYTVSVTTVSDGLTSLPVQKICKTSITDPPVPNKAPLVKAVSHNSLSVEFPDFESVNGPLKAYAVMIVTEAEGCLPSKSDLDYTYNDFKQKMTATYVTYVIDVEEISSSSHSQNGHNIVDVGKGNTMYGYENGPLIPLHSYRASVAGFTNINFTVANKIMGEQSYVSFSPCSEVVSLPQDPGVIAGAVIGCLLAILAVVAIGGYIFWRRRRKDKRNTEVSFSPIKIKKSKMIKVENFESYFKKQQADSNCGFAEEYEELKSAGVHQPKFAAEIAENRGKNRYNNVLPYDISRVKLSNPSCTTDDYINANYMPGYSSKKAFIAAQGPLPNTIEDFWRMIWEKNIYSIVMLTKCVEQARTKCEQYWPDKQSKSYGDIIVTMVSEVVLPEWTIRDFNVENADTMESHTVRQFHFTSWPDHGVPETTDLLINFRHLVHEYSSQNPIDSPILVHCSAGVGRTGTFIAIDRLIQQIEMENTVDVYGVVYDLRMHRPLMVQTEDQYVFLNQCVMDIIRSQKEKKTDLIYQNTTAMAIYENFTPGPAFGKANGYHA</sequence>
<keyword id="KW-0965">Cell junction</keyword>
<keyword id="KW-1003">Cell membrane</keyword>
<keyword id="KW-0966">Cell projection</keyword>
<keyword id="KW-0325">Glycoprotein</keyword>
<keyword id="KW-0378">Hydrolase</keyword>
<keyword id="KW-0472">Membrane</keyword>
<keyword id="KW-0904">Protein phosphatase</keyword>
<keyword id="KW-1185">Reference proteome</keyword>
<keyword id="KW-0677">Repeat</keyword>
<keyword id="KW-0732">Signal</keyword>
<keyword id="KW-0812">Transmembrane</keyword>
<keyword id="KW-1133">Transmembrane helix</keyword>
<name>PTPRJ_CHICK</name>
<reference key="1">
    <citation type="journal article" date="1999" name="J. Neurosci.">
        <title>The supporting-cell antigen: a receptor-like protein tyrosine phosphatase expressed in the sensory epithelia of the avian inner ear.</title>
        <authorList>
            <person name="Kruger R.P."/>
            <person name="Goodyear R.J."/>
            <person name="Legan P.K."/>
            <person name="Warchol M.E."/>
            <person name="Raphael Y."/>
            <person name="Cotanche D.A."/>
            <person name="Richardson G.P."/>
        </authorList>
    </citation>
    <scope>NUCLEOTIDE SEQUENCE [MRNA]</scope>
    <scope>FUNCTION</scope>
    <scope>TISSUE SPECIFICITY</scope>
    <source>
        <tissue>Intestine</tissue>
    </source>
</reference>
<evidence type="ECO:0000250" key="1"/>
<evidence type="ECO:0000250" key="2">
    <source>
        <dbReference type="UniProtKB" id="Q12913"/>
    </source>
</evidence>
<evidence type="ECO:0000255" key="3"/>
<evidence type="ECO:0000255" key="4">
    <source>
        <dbReference type="PROSITE-ProRule" id="PRU00160"/>
    </source>
</evidence>
<evidence type="ECO:0000255" key="5">
    <source>
        <dbReference type="PROSITE-ProRule" id="PRU00316"/>
    </source>
</evidence>
<evidence type="ECO:0000255" key="6">
    <source>
        <dbReference type="PROSITE-ProRule" id="PRU10044"/>
    </source>
</evidence>
<evidence type="ECO:0000256" key="7">
    <source>
        <dbReference type="SAM" id="MobiDB-lite"/>
    </source>
</evidence>
<evidence type="ECO:0000269" key="8">
    <source>
    </source>
</evidence>
<evidence type="ECO:0000305" key="9"/>
<accession>Q9W6V5</accession>
<proteinExistence type="evidence at transcript level"/>
<organism>
    <name type="scientific">Gallus gallus</name>
    <name type="common">Chicken</name>
    <dbReference type="NCBI Taxonomy" id="9031"/>
    <lineage>
        <taxon>Eukaryota</taxon>
        <taxon>Metazoa</taxon>
        <taxon>Chordata</taxon>
        <taxon>Craniata</taxon>
        <taxon>Vertebrata</taxon>
        <taxon>Euteleostomi</taxon>
        <taxon>Archelosauria</taxon>
        <taxon>Archosauria</taxon>
        <taxon>Dinosauria</taxon>
        <taxon>Saurischia</taxon>
        <taxon>Theropoda</taxon>
        <taxon>Coelurosauria</taxon>
        <taxon>Aves</taxon>
        <taxon>Neognathae</taxon>
        <taxon>Galloanserae</taxon>
        <taxon>Galliformes</taxon>
        <taxon>Phasianidae</taxon>
        <taxon>Phasianinae</taxon>
        <taxon>Gallus</taxon>
    </lineage>
</organism>
<comment type="function">
    <text evidence="2 8">Tyrosine phosphatase which dephosphorylates or contributes to the dephosphorylation of several substrates (By similarity). Plays a role in cell adhesion, migration, proliferation and differentiation (By similarity). Has a role in megakaryocytes and platelet formation. May influence the potential of nonsensory supporting cells to either proliferate or differentiate into hair cells (PubMed:10366616).</text>
</comment>
<comment type="catalytic activity">
    <reaction evidence="6">
        <text>O-phospho-L-tyrosyl-[protein] + H2O = L-tyrosyl-[protein] + phosphate</text>
        <dbReference type="Rhea" id="RHEA:10684"/>
        <dbReference type="Rhea" id="RHEA-COMP:10136"/>
        <dbReference type="Rhea" id="RHEA-COMP:20101"/>
        <dbReference type="ChEBI" id="CHEBI:15377"/>
        <dbReference type="ChEBI" id="CHEBI:43474"/>
        <dbReference type="ChEBI" id="CHEBI:46858"/>
        <dbReference type="ChEBI" id="CHEBI:61978"/>
        <dbReference type="EC" id="3.1.3.48"/>
    </reaction>
</comment>
<comment type="subcellular location">
    <subcellularLocation>
        <location evidence="1">Cell membrane</location>
        <topology evidence="1">Single-pass type I membrane protein</topology>
    </subcellularLocation>
    <subcellularLocation>
        <location evidence="1">Cell projection</location>
        <location evidence="1">Ruffle membrane</location>
    </subcellularLocation>
    <subcellularLocation>
        <location evidence="1">Cell junction</location>
    </subcellularLocation>
</comment>
<comment type="tissue specificity">
    <text evidence="8">Found on the apical surfaces of retinal Mueller cells, renal tubule cells and intestinal brush border cells.</text>
</comment>
<comment type="similarity">
    <text evidence="9">Belongs to the protein-tyrosine phosphatase family. Receptor class 3 subfamily.</text>
</comment>
<dbReference type="EC" id="3.1.3.48"/>
<dbReference type="EMBL" id="AJ238216">
    <property type="protein sequence ID" value="CAB41885.2"/>
    <property type="molecule type" value="mRNA"/>
</dbReference>
<dbReference type="RefSeq" id="NP_989952.1">
    <property type="nucleotide sequence ID" value="NM_204621.1"/>
</dbReference>
<dbReference type="SMR" id="Q9W6V5"/>
<dbReference type="FunCoup" id="Q9W6V5">
    <property type="interactions" value="107"/>
</dbReference>
<dbReference type="STRING" id="9031.ENSGALP00000010295"/>
<dbReference type="GlyCosmos" id="Q9W6V5">
    <property type="glycosylation" value="37 sites, No reported glycans"/>
</dbReference>
<dbReference type="GlyGen" id="Q9W6V5">
    <property type="glycosylation" value="37 sites"/>
</dbReference>
<dbReference type="Ensembl" id="ENSGALT00000010309">
    <property type="protein sequence ID" value="ENSGALP00000010295"/>
    <property type="gene ID" value="ENSGALG00000006382"/>
</dbReference>
<dbReference type="GeneID" id="395330"/>
<dbReference type="KEGG" id="gga:395330"/>
<dbReference type="CTD" id="5795"/>
<dbReference type="VEuPathDB" id="HostDB:geneid_395330"/>
<dbReference type="eggNOG" id="KOG0791">
    <property type="taxonomic scope" value="Eukaryota"/>
</dbReference>
<dbReference type="InParanoid" id="Q9W6V5"/>
<dbReference type="OrthoDB" id="10253954at2759"/>
<dbReference type="PhylomeDB" id="Q9W6V5"/>
<dbReference type="PRO" id="PR:Q9W6V5"/>
<dbReference type="Proteomes" id="UP000000539">
    <property type="component" value="Unassembled WGS sequence"/>
</dbReference>
<dbReference type="GO" id="GO:0005911">
    <property type="term" value="C:cell-cell junction"/>
    <property type="evidence" value="ECO:0000250"/>
    <property type="project" value="UniProtKB"/>
</dbReference>
<dbReference type="GO" id="GO:0005886">
    <property type="term" value="C:plasma membrane"/>
    <property type="evidence" value="ECO:0000250"/>
    <property type="project" value="UniProtKB"/>
</dbReference>
<dbReference type="GO" id="GO:0032587">
    <property type="term" value="C:ruffle membrane"/>
    <property type="evidence" value="ECO:0007669"/>
    <property type="project" value="UniProtKB-SubCell"/>
</dbReference>
<dbReference type="GO" id="GO:0016791">
    <property type="term" value="F:phosphatase activity"/>
    <property type="evidence" value="ECO:0000250"/>
    <property type="project" value="UniProtKB"/>
</dbReference>
<dbReference type="GO" id="GO:0004725">
    <property type="term" value="F:protein tyrosine phosphatase activity"/>
    <property type="evidence" value="ECO:0007669"/>
    <property type="project" value="UniProtKB-EC"/>
</dbReference>
<dbReference type="GO" id="GO:0042059">
    <property type="term" value="P:negative regulation of epidermal growth factor receptor signaling pathway"/>
    <property type="evidence" value="ECO:0000250"/>
    <property type="project" value="UniProtKB"/>
</dbReference>
<dbReference type="GO" id="GO:0043407">
    <property type="term" value="P:negative regulation of MAP kinase activity"/>
    <property type="evidence" value="ECO:0000250"/>
    <property type="project" value="UniProtKB"/>
</dbReference>
<dbReference type="GO" id="GO:0051898">
    <property type="term" value="P:negative regulation of phosphatidylinositol 3-kinase/protein kinase B signal transduction"/>
    <property type="evidence" value="ECO:0000250"/>
    <property type="project" value="UniProtKB"/>
</dbReference>
<dbReference type="GO" id="GO:0050860">
    <property type="term" value="P:negative regulation of T cell receptor signaling pathway"/>
    <property type="evidence" value="ECO:0000250"/>
    <property type="project" value="UniProtKB"/>
</dbReference>
<dbReference type="GO" id="GO:0030220">
    <property type="term" value="P:platelet formation"/>
    <property type="evidence" value="ECO:0000250"/>
    <property type="project" value="UniProtKB"/>
</dbReference>
<dbReference type="GO" id="GO:0048008">
    <property type="term" value="P:platelet-derived growth factor receptor signaling pathway"/>
    <property type="evidence" value="ECO:0000250"/>
    <property type="project" value="UniProtKB"/>
</dbReference>
<dbReference type="GO" id="GO:0045785">
    <property type="term" value="P:positive regulation of cell adhesion"/>
    <property type="evidence" value="ECO:0000250"/>
    <property type="project" value="UniProtKB"/>
</dbReference>
<dbReference type="GO" id="GO:0051894">
    <property type="term" value="P:positive regulation of focal adhesion assembly"/>
    <property type="evidence" value="ECO:0000250"/>
    <property type="project" value="UniProtKB"/>
</dbReference>
<dbReference type="CDD" id="cd00063">
    <property type="entry name" value="FN3"/>
    <property type="match status" value="8"/>
</dbReference>
<dbReference type="CDD" id="cd14615">
    <property type="entry name" value="R-PTPc-J"/>
    <property type="match status" value="1"/>
</dbReference>
<dbReference type="CDD" id="cd12087">
    <property type="entry name" value="TM_EGFR-like"/>
    <property type="match status" value="1"/>
</dbReference>
<dbReference type="FunFam" id="3.90.190.10:FF:000009">
    <property type="entry name" value="Receptor-type tyrosine-protein phosphatase beta"/>
    <property type="match status" value="1"/>
</dbReference>
<dbReference type="FunFam" id="2.60.40.10:FF:000362">
    <property type="entry name" value="Receptor-type tyrosine-protein phosphatase eta"/>
    <property type="match status" value="8"/>
</dbReference>
<dbReference type="Gene3D" id="2.60.40.10">
    <property type="entry name" value="Immunoglobulins"/>
    <property type="match status" value="8"/>
</dbReference>
<dbReference type="Gene3D" id="3.90.190.10">
    <property type="entry name" value="Protein tyrosine phosphatase superfamily"/>
    <property type="match status" value="1"/>
</dbReference>
<dbReference type="InterPro" id="IPR003961">
    <property type="entry name" value="FN3_dom"/>
</dbReference>
<dbReference type="InterPro" id="IPR036116">
    <property type="entry name" value="FN3_sf"/>
</dbReference>
<dbReference type="InterPro" id="IPR013783">
    <property type="entry name" value="Ig-like_fold"/>
</dbReference>
<dbReference type="InterPro" id="IPR029021">
    <property type="entry name" value="Prot-tyrosine_phosphatase-like"/>
</dbReference>
<dbReference type="InterPro" id="IPR000242">
    <property type="entry name" value="PTP_cat"/>
</dbReference>
<dbReference type="InterPro" id="IPR041201">
    <property type="entry name" value="PTPRJ_TM"/>
</dbReference>
<dbReference type="InterPro" id="IPR050713">
    <property type="entry name" value="RTP_Phos/Ushers"/>
</dbReference>
<dbReference type="InterPro" id="IPR016130">
    <property type="entry name" value="Tyr_Pase_AS"/>
</dbReference>
<dbReference type="InterPro" id="IPR003595">
    <property type="entry name" value="Tyr_Pase_cat"/>
</dbReference>
<dbReference type="InterPro" id="IPR000387">
    <property type="entry name" value="Tyr_Pase_dom"/>
</dbReference>
<dbReference type="PANTHER" id="PTHR46957">
    <property type="entry name" value="CYTOKINE RECEPTOR"/>
    <property type="match status" value="1"/>
</dbReference>
<dbReference type="PANTHER" id="PTHR46957:SF5">
    <property type="entry name" value="PROTEIN-TYROSINE-PHOSPHATASE"/>
    <property type="match status" value="1"/>
</dbReference>
<dbReference type="Pfam" id="PF00041">
    <property type="entry name" value="fn3"/>
    <property type="match status" value="8"/>
</dbReference>
<dbReference type="Pfam" id="PF18861">
    <property type="entry name" value="PTP_tm"/>
    <property type="match status" value="1"/>
</dbReference>
<dbReference type="Pfam" id="PF00102">
    <property type="entry name" value="Y_phosphatase"/>
    <property type="match status" value="1"/>
</dbReference>
<dbReference type="PRINTS" id="PR00700">
    <property type="entry name" value="PRTYPHPHTASE"/>
</dbReference>
<dbReference type="SMART" id="SM00060">
    <property type="entry name" value="FN3"/>
    <property type="match status" value="9"/>
</dbReference>
<dbReference type="SMART" id="SM00194">
    <property type="entry name" value="PTPc"/>
    <property type="match status" value="1"/>
</dbReference>
<dbReference type="SMART" id="SM00404">
    <property type="entry name" value="PTPc_motif"/>
    <property type="match status" value="1"/>
</dbReference>
<dbReference type="SUPFAM" id="SSF52799">
    <property type="entry name" value="(Phosphotyrosine protein) phosphatases II"/>
    <property type="match status" value="1"/>
</dbReference>
<dbReference type="SUPFAM" id="SSF49265">
    <property type="entry name" value="Fibronectin type III"/>
    <property type="match status" value="6"/>
</dbReference>
<dbReference type="PROSITE" id="PS50853">
    <property type="entry name" value="FN3"/>
    <property type="match status" value="9"/>
</dbReference>
<dbReference type="PROSITE" id="PS00383">
    <property type="entry name" value="TYR_PHOSPHATASE_1"/>
    <property type="match status" value="1"/>
</dbReference>
<dbReference type="PROSITE" id="PS50056">
    <property type="entry name" value="TYR_PHOSPHATASE_2"/>
    <property type="match status" value="1"/>
</dbReference>
<dbReference type="PROSITE" id="PS50055">
    <property type="entry name" value="TYR_PHOSPHATASE_PTP"/>
    <property type="match status" value="1"/>
</dbReference>
<feature type="signal peptide" evidence="3">
    <location>
        <begin position="1"/>
        <end position="24"/>
    </location>
</feature>
<feature type="chain" id="PRO_5000065173" description="Receptor-type tyrosine-protein phosphatase eta">
    <location>
        <begin position="25"/>
        <end position="1406"/>
    </location>
</feature>
<feature type="topological domain" description="Extracellular" evidence="3">
    <location>
        <begin position="25"/>
        <end position="1044"/>
    </location>
</feature>
<feature type="transmembrane region" description="Helical" evidence="3">
    <location>
        <begin position="1045"/>
        <end position="1065"/>
    </location>
</feature>
<feature type="topological domain" description="Cytoplasmic" evidence="3">
    <location>
        <begin position="1066"/>
        <end position="1406"/>
    </location>
</feature>
<feature type="domain" description="Fibronectin type-III 1" evidence="5">
    <location>
        <begin position="82"/>
        <end position="170"/>
    </location>
</feature>
<feature type="domain" description="Fibronectin type-III 2" evidence="5">
    <location>
        <begin position="171"/>
        <end position="259"/>
    </location>
</feature>
<feature type="domain" description="Fibronectin type-III 3" evidence="5">
    <location>
        <begin position="260"/>
        <end position="343"/>
    </location>
</feature>
<feature type="domain" description="Fibronectin type-III 4" evidence="5">
    <location>
        <begin position="346"/>
        <end position="437"/>
    </location>
</feature>
<feature type="domain" description="Fibronectin type-III 5" evidence="5">
    <location>
        <begin position="438"/>
        <end position="523"/>
    </location>
</feature>
<feature type="domain" description="Fibronectin type-III 6" evidence="5">
    <location>
        <begin position="524"/>
        <end position="614"/>
    </location>
</feature>
<feature type="domain" description="Fibronectin type-III 7" evidence="5">
    <location>
        <begin position="615"/>
        <end position="703"/>
    </location>
</feature>
<feature type="domain" description="Fibronectin type-III 8" evidence="5">
    <location>
        <begin position="704"/>
        <end position="793"/>
    </location>
</feature>
<feature type="domain" description="Fibronectin type-III 9" evidence="5">
    <location>
        <begin position="794"/>
        <end position="888"/>
    </location>
</feature>
<feature type="domain" description="Fibronectin type-III 10" evidence="5">
    <location>
        <begin position="887"/>
        <end position="979"/>
    </location>
</feature>
<feature type="domain" description="Tyrosine-protein phosphatase" evidence="4">
    <location>
        <begin position="1110"/>
        <end position="1367"/>
    </location>
</feature>
<feature type="region of interest" description="Disordered" evidence="7">
    <location>
        <begin position="39"/>
        <end position="72"/>
    </location>
</feature>
<feature type="compositionally biased region" description="Polar residues" evidence="7">
    <location>
        <begin position="41"/>
        <end position="58"/>
    </location>
</feature>
<feature type="active site" description="Phosphocysteine intermediate" evidence="4 6">
    <location>
        <position position="1308"/>
    </location>
</feature>
<feature type="binding site" evidence="1">
    <location>
        <position position="1274"/>
    </location>
    <ligand>
        <name>substrate</name>
    </ligand>
</feature>
<feature type="binding site" evidence="1">
    <location>
        <begin position="1308"/>
        <end position="1314"/>
    </location>
    <ligand>
        <name>substrate</name>
    </ligand>
</feature>
<feature type="binding site" evidence="1">
    <location>
        <position position="1352"/>
    </location>
    <ligand>
        <name>substrate</name>
    </ligand>
</feature>
<feature type="glycosylation site" description="N-linked (GlcNAc...) asparagine" evidence="3">
    <location>
        <position position="36"/>
    </location>
</feature>
<feature type="glycosylation site" description="N-linked (GlcNAc...) asparagine" evidence="3">
    <location>
        <position position="52"/>
    </location>
</feature>
<feature type="glycosylation site" description="N-linked (GlcNAc...) asparagine" evidence="3">
    <location>
        <position position="97"/>
    </location>
</feature>
<feature type="glycosylation site" description="N-linked (GlcNAc...) asparagine" evidence="3">
    <location>
        <position position="103"/>
    </location>
</feature>
<feature type="glycosylation site" description="N-linked (GlcNAc...) asparagine" evidence="3">
    <location>
        <position position="118"/>
    </location>
</feature>
<feature type="glycosylation site" description="N-linked (GlcNAc...) asparagine" evidence="3">
    <location>
        <position position="124"/>
    </location>
</feature>
<feature type="glycosylation site" description="N-linked (GlcNAc...) asparagine" evidence="3">
    <location>
        <position position="186"/>
    </location>
</feature>
<feature type="glycosylation site" description="N-linked (GlcNAc...) asparagine" evidence="3">
    <location>
        <position position="192"/>
    </location>
</feature>
<feature type="glycosylation site" description="N-linked (GlcNAc...) asparagine" evidence="3">
    <location>
        <position position="243"/>
    </location>
</feature>
<feature type="glycosylation site" description="N-linked (GlcNAc...) asparagine" evidence="3">
    <location>
        <position position="275"/>
    </location>
</feature>
<feature type="glycosylation site" description="N-linked (GlcNAc...) asparagine" evidence="3">
    <location>
        <position position="281"/>
    </location>
</feature>
<feature type="glycosylation site" description="N-linked (GlcNAc...) asparagine" evidence="3">
    <location>
        <position position="296"/>
    </location>
</feature>
<feature type="glycosylation site" description="N-linked (GlcNAc...) asparagine" evidence="3">
    <location>
        <position position="302"/>
    </location>
</feature>
<feature type="glycosylation site" description="N-linked (GlcNAc...) asparagine" evidence="3">
    <location>
        <position position="331"/>
    </location>
</feature>
<feature type="glycosylation site" description="N-linked (GlcNAc...) asparagine" evidence="3">
    <location>
        <position position="332"/>
    </location>
</feature>
<feature type="glycosylation site" description="N-linked (GlcNAc...) asparagine" evidence="3">
    <location>
        <position position="364"/>
    </location>
</feature>
<feature type="glycosylation site" description="N-linked (GlcNAc...) asparagine" evidence="3">
    <location>
        <position position="385"/>
    </location>
</feature>
<feature type="glycosylation site" description="N-linked (GlcNAc...) asparagine" evidence="3">
    <location>
        <position position="391"/>
    </location>
</feature>
<feature type="glycosylation site" description="N-linked (GlcNAc...) asparagine" evidence="3">
    <location>
        <position position="453"/>
    </location>
</feature>
<feature type="glycosylation site" description="N-linked (GlcNAc...) asparagine" evidence="3">
    <location>
        <position position="459"/>
    </location>
</feature>
<feature type="glycosylation site" description="N-linked (GlcNAc...) asparagine" evidence="3">
    <location>
        <position position="484"/>
    </location>
</feature>
<feature type="glycosylation site" description="N-linked (GlcNAc...) asparagine" evidence="3">
    <location>
        <position position="500"/>
    </location>
</feature>
<feature type="glycosylation site" description="N-linked (GlcNAc...) asparagine" evidence="3">
    <location>
        <position position="510"/>
    </location>
</feature>
<feature type="glycosylation site" description="N-linked (GlcNAc...) asparagine" evidence="3">
    <location>
        <position position="547"/>
    </location>
</feature>
<feature type="glycosylation site" description="N-linked (GlcNAc...) asparagine" evidence="3">
    <location>
        <position position="568"/>
    </location>
</feature>
<feature type="glycosylation site" description="N-linked (GlcNAc...) asparagine" evidence="3">
    <location>
        <position position="630"/>
    </location>
</feature>
<feature type="glycosylation site" description="N-linked (GlcNAc...) asparagine" evidence="3">
    <location>
        <position position="636"/>
    </location>
</feature>
<feature type="glycosylation site" description="N-linked (GlcNAc...) asparagine" evidence="3">
    <location>
        <position position="651"/>
    </location>
</feature>
<feature type="glycosylation site" description="N-linked (GlcNAc...) asparagine" evidence="3">
    <location>
        <position position="657"/>
    </location>
</feature>
<feature type="glycosylation site" description="N-linked (GlcNAc...) asparagine" evidence="3">
    <location>
        <position position="719"/>
    </location>
</feature>
<feature type="glycosylation site" description="N-linked (GlcNAc...) asparagine" evidence="3">
    <location>
        <position position="745"/>
    </location>
</feature>
<feature type="glycosylation site" description="N-linked (GlcNAc...) asparagine" evidence="3">
    <location>
        <position position="750"/>
    </location>
</feature>
<feature type="glycosylation site" description="N-linked (GlcNAc...) asparagine" evidence="3">
    <location>
        <position position="766"/>
    </location>
</feature>
<feature type="glycosylation site" description="N-linked (GlcNAc...) asparagine" evidence="3">
    <location>
        <position position="776"/>
    </location>
</feature>
<feature type="glycosylation site" description="N-linked (GlcNAc...) asparagine" evidence="3">
    <location>
        <position position="804"/>
    </location>
</feature>
<feature type="glycosylation site" description="N-linked (GlcNAc...) asparagine" evidence="3">
    <location>
        <position position="828"/>
    </location>
</feature>
<feature type="glycosylation site" description="N-linked (GlcNAc...) asparagine" evidence="3">
    <location>
        <position position="1010"/>
    </location>
</feature>
<gene>
    <name type="primary">PTPRJ</name>
</gene>
<protein>
    <recommendedName>
        <fullName>Receptor-type tyrosine-protein phosphatase eta</fullName>
        <shortName>Protein-tyrosine phosphatase eta</shortName>
        <shortName>R-PTP-eta</shortName>
        <ecNumber>3.1.3.48</ecNumber>
    </recommendedName>
    <alternativeName>
        <fullName>HPTP eta</fullName>
    </alternativeName>
    <alternativeName>
        <fullName>Protein-tyrosine phosphatase receptor type J</fullName>
        <shortName>R-PTP-J</shortName>
    </alternativeName>
    <alternativeName>
        <fullName>Supporting-cell antigen</fullName>
    </alternativeName>
</protein>